<name>MURD_SHEON</name>
<protein>
    <recommendedName>
        <fullName evidence="1">UDP-N-acetylmuramoylalanine--D-glutamate ligase</fullName>
        <ecNumber evidence="1">6.3.2.9</ecNumber>
    </recommendedName>
    <alternativeName>
        <fullName evidence="1">D-glutamic acid-adding enzyme</fullName>
    </alternativeName>
    <alternativeName>
        <fullName evidence="1">UDP-N-acetylmuramoyl-L-alanyl-D-glutamate synthetase</fullName>
    </alternativeName>
</protein>
<gene>
    <name evidence="1" type="primary">murD</name>
    <name type="ordered locus">SO_4221</name>
</gene>
<comment type="function">
    <text evidence="1">Cell wall formation. Catalyzes the addition of glutamate to the nucleotide precursor UDP-N-acetylmuramoyl-L-alanine (UMA).</text>
</comment>
<comment type="catalytic activity">
    <reaction evidence="1">
        <text>UDP-N-acetyl-alpha-D-muramoyl-L-alanine + D-glutamate + ATP = UDP-N-acetyl-alpha-D-muramoyl-L-alanyl-D-glutamate + ADP + phosphate + H(+)</text>
        <dbReference type="Rhea" id="RHEA:16429"/>
        <dbReference type="ChEBI" id="CHEBI:15378"/>
        <dbReference type="ChEBI" id="CHEBI:29986"/>
        <dbReference type="ChEBI" id="CHEBI:30616"/>
        <dbReference type="ChEBI" id="CHEBI:43474"/>
        <dbReference type="ChEBI" id="CHEBI:83898"/>
        <dbReference type="ChEBI" id="CHEBI:83900"/>
        <dbReference type="ChEBI" id="CHEBI:456216"/>
        <dbReference type="EC" id="6.3.2.9"/>
    </reaction>
</comment>
<comment type="pathway">
    <text evidence="1">Cell wall biogenesis; peptidoglycan biosynthesis.</text>
</comment>
<comment type="subcellular location">
    <subcellularLocation>
        <location evidence="1">Cytoplasm</location>
    </subcellularLocation>
</comment>
<comment type="similarity">
    <text evidence="1">Belongs to the MurCDEF family.</text>
</comment>
<dbReference type="EC" id="6.3.2.9" evidence="1"/>
<dbReference type="EMBL" id="AE014299">
    <property type="protein sequence ID" value="AAN57193.1"/>
    <property type="molecule type" value="Genomic_DNA"/>
</dbReference>
<dbReference type="RefSeq" id="NP_719749.1">
    <property type="nucleotide sequence ID" value="NC_004347.2"/>
</dbReference>
<dbReference type="RefSeq" id="WP_011073902.1">
    <property type="nucleotide sequence ID" value="NC_004347.2"/>
</dbReference>
<dbReference type="SMR" id="Q8E9P6"/>
<dbReference type="STRING" id="211586.SO_4221"/>
<dbReference type="PaxDb" id="211586-SO_4221"/>
<dbReference type="KEGG" id="son:SO_4221"/>
<dbReference type="PATRIC" id="fig|211586.12.peg.4079"/>
<dbReference type="eggNOG" id="COG0771">
    <property type="taxonomic scope" value="Bacteria"/>
</dbReference>
<dbReference type="HOGENOM" id="CLU_032540_1_0_6"/>
<dbReference type="OrthoDB" id="9809796at2"/>
<dbReference type="PhylomeDB" id="Q8E9P6"/>
<dbReference type="BioCyc" id="SONE211586:G1GMP-3898-MONOMER"/>
<dbReference type="UniPathway" id="UPA00219"/>
<dbReference type="Proteomes" id="UP000008186">
    <property type="component" value="Chromosome"/>
</dbReference>
<dbReference type="GO" id="GO:0005737">
    <property type="term" value="C:cytoplasm"/>
    <property type="evidence" value="ECO:0007669"/>
    <property type="project" value="UniProtKB-SubCell"/>
</dbReference>
<dbReference type="GO" id="GO:0005524">
    <property type="term" value="F:ATP binding"/>
    <property type="evidence" value="ECO:0007669"/>
    <property type="project" value="UniProtKB-UniRule"/>
</dbReference>
<dbReference type="GO" id="GO:0008764">
    <property type="term" value="F:UDP-N-acetylmuramoylalanine-D-glutamate ligase activity"/>
    <property type="evidence" value="ECO:0007669"/>
    <property type="project" value="UniProtKB-UniRule"/>
</dbReference>
<dbReference type="GO" id="GO:0051301">
    <property type="term" value="P:cell division"/>
    <property type="evidence" value="ECO:0007669"/>
    <property type="project" value="UniProtKB-KW"/>
</dbReference>
<dbReference type="GO" id="GO:0071555">
    <property type="term" value="P:cell wall organization"/>
    <property type="evidence" value="ECO:0007669"/>
    <property type="project" value="UniProtKB-KW"/>
</dbReference>
<dbReference type="GO" id="GO:0009252">
    <property type="term" value="P:peptidoglycan biosynthetic process"/>
    <property type="evidence" value="ECO:0007669"/>
    <property type="project" value="UniProtKB-UniRule"/>
</dbReference>
<dbReference type="GO" id="GO:0008360">
    <property type="term" value="P:regulation of cell shape"/>
    <property type="evidence" value="ECO:0007669"/>
    <property type="project" value="UniProtKB-KW"/>
</dbReference>
<dbReference type="Gene3D" id="3.90.190.20">
    <property type="entry name" value="Mur ligase, C-terminal domain"/>
    <property type="match status" value="1"/>
</dbReference>
<dbReference type="Gene3D" id="3.40.1190.10">
    <property type="entry name" value="Mur-like, catalytic domain"/>
    <property type="match status" value="1"/>
</dbReference>
<dbReference type="Gene3D" id="3.40.50.720">
    <property type="entry name" value="NAD(P)-binding Rossmann-like Domain"/>
    <property type="match status" value="1"/>
</dbReference>
<dbReference type="HAMAP" id="MF_00639">
    <property type="entry name" value="MurD"/>
    <property type="match status" value="1"/>
</dbReference>
<dbReference type="InterPro" id="IPR036565">
    <property type="entry name" value="Mur-like_cat_sf"/>
</dbReference>
<dbReference type="InterPro" id="IPR004101">
    <property type="entry name" value="Mur_ligase_C"/>
</dbReference>
<dbReference type="InterPro" id="IPR036615">
    <property type="entry name" value="Mur_ligase_C_dom_sf"/>
</dbReference>
<dbReference type="InterPro" id="IPR013221">
    <property type="entry name" value="Mur_ligase_cen"/>
</dbReference>
<dbReference type="InterPro" id="IPR005762">
    <property type="entry name" value="MurD"/>
</dbReference>
<dbReference type="NCBIfam" id="TIGR01087">
    <property type="entry name" value="murD"/>
    <property type="match status" value="1"/>
</dbReference>
<dbReference type="PANTHER" id="PTHR43692">
    <property type="entry name" value="UDP-N-ACETYLMURAMOYLALANINE--D-GLUTAMATE LIGASE"/>
    <property type="match status" value="1"/>
</dbReference>
<dbReference type="PANTHER" id="PTHR43692:SF1">
    <property type="entry name" value="UDP-N-ACETYLMURAMOYLALANINE--D-GLUTAMATE LIGASE"/>
    <property type="match status" value="1"/>
</dbReference>
<dbReference type="Pfam" id="PF02875">
    <property type="entry name" value="Mur_ligase_C"/>
    <property type="match status" value="1"/>
</dbReference>
<dbReference type="Pfam" id="PF08245">
    <property type="entry name" value="Mur_ligase_M"/>
    <property type="match status" value="1"/>
</dbReference>
<dbReference type="Pfam" id="PF21799">
    <property type="entry name" value="MurD-like_N"/>
    <property type="match status" value="1"/>
</dbReference>
<dbReference type="SUPFAM" id="SSF51984">
    <property type="entry name" value="MurCD N-terminal domain"/>
    <property type="match status" value="1"/>
</dbReference>
<dbReference type="SUPFAM" id="SSF53623">
    <property type="entry name" value="MurD-like peptide ligases, catalytic domain"/>
    <property type="match status" value="1"/>
</dbReference>
<dbReference type="SUPFAM" id="SSF53244">
    <property type="entry name" value="MurD-like peptide ligases, peptide-binding domain"/>
    <property type="match status" value="1"/>
</dbReference>
<sequence length="439" mass="46590">MQSQYSHIVLGLGATGLSVVRYLCGKGITPLVMDSRRQPPGAETLASSFPEVKLIAGGFDCRYLVQATQIIISPGIAMNTPEVRAALDMGIEVIGDVELFAREIADRKPCVIGITGSNGKTTVTTLVGEMLREAGIAVAVGGNIGIPALDLLKENADIFVLELSSFQLETTHSLNCVASTCLNVTEDHMDRYSDMDAYRKAKLRLYHQSRSIIFNRDDALTIPTEPMNQNSFGLAPPEGDEWGICDSKIYHGHSEIMPITEVSLIGSHNHANLLAAMALVYAVGVDKQVMANVARTFTGLSHRCEVVGVKGGVTYVNDSKATNVGATVAALDGLSDHLGDIILIAGGDGKGADFSPLEEPLTKVTHLITLGRDGNKIAALKEGAIKVDSMAAAVAKAAQLATSGDIVLLSPACASLDMYSNFMARGDDFRSQVEQLDGE</sequence>
<evidence type="ECO:0000255" key="1">
    <source>
        <dbReference type="HAMAP-Rule" id="MF_00639"/>
    </source>
</evidence>
<feature type="chain" id="PRO_0000109079" description="UDP-N-acetylmuramoylalanine--D-glutamate ligase">
    <location>
        <begin position="1"/>
        <end position="439"/>
    </location>
</feature>
<feature type="binding site" evidence="1">
    <location>
        <begin position="116"/>
        <end position="122"/>
    </location>
    <ligand>
        <name>ATP</name>
        <dbReference type="ChEBI" id="CHEBI:30616"/>
    </ligand>
</feature>
<accession>Q8E9P6</accession>
<reference key="1">
    <citation type="journal article" date="2002" name="Nat. Biotechnol.">
        <title>Genome sequence of the dissimilatory metal ion-reducing bacterium Shewanella oneidensis.</title>
        <authorList>
            <person name="Heidelberg J.F."/>
            <person name="Paulsen I.T."/>
            <person name="Nelson K.E."/>
            <person name="Gaidos E.J."/>
            <person name="Nelson W.C."/>
            <person name="Read T.D."/>
            <person name="Eisen J.A."/>
            <person name="Seshadri R."/>
            <person name="Ward N.L."/>
            <person name="Methe B.A."/>
            <person name="Clayton R.A."/>
            <person name="Meyer T."/>
            <person name="Tsapin A."/>
            <person name="Scott J."/>
            <person name="Beanan M.J."/>
            <person name="Brinkac L.M."/>
            <person name="Daugherty S.C."/>
            <person name="DeBoy R.T."/>
            <person name="Dodson R.J."/>
            <person name="Durkin A.S."/>
            <person name="Haft D.H."/>
            <person name="Kolonay J.F."/>
            <person name="Madupu R."/>
            <person name="Peterson J.D."/>
            <person name="Umayam L.A."/>
            <person name="White O."/>
            <person name="Wolf A.M."/>
            <person name="Vamathevan J.J."/>
            <person name="Weidman J.F."/>
            <person name="Impraim M."/>
            <person name="Lee K."/>
            <person name="Berry K.J."/>
            <person name="Lee C."/>
            <person name="Mueller J."/>
            <person name="Khouri H.M."/>
            <person name="Gill J."/>
            <person name="Utterback T.R."/>
            <person name="McDonald L.A."/>
            <person name="Feldblyum T.V."/>
            <person name="Smith H.O."/>
            <person name="Venter J.C."/>
            <person name="Nealson K.H."/>
            <person name="Fraser C.M."/>
        </authorList>
    </citation>
    <scope>NUCLEOTIDE SEQUENCE [LARGE SCALE GENOMIC DNA]</scope>
    <source>
        <strain>ATCC 700550 / JCM 31522 / CIP 106686 / LMG 19005 / NCIMB 14063 / MR-1</strain>
    </source>
</reference>
<organism>
    <name type="scientific">Shewanella oneidensis (strain ATCC 700550 / JCM 31522 / CIP 106686 / LMG 19005 / NCIMB 14063 / MR-1)</name>
    <dbReference type="NCBI Taxonomy" id="211586"/>
    <lineage>
        <taxon>Bacteria</taxon>
        <taxon>Pseudomonadati</taxon>
        <taxon>Pseudomonadota</taxon>
        <taxon>Gammaproteobacteria</taxon>
        <taxon>Alteromonadales</taxon>
        <taxon>Shewanellaceae</taxon>
        <taxon>Shewanella</taxon>
    </lineage>
</organism>
<proteinExistence type="inferred from homology"/>
<keyword id="KW-0067">ATP-binding</keyword>
<keyword id="KW-0131">Cell cycle</keyword>
<keyword id="KW-0132">Cell division</keyword>
<keyword id="KW-0133">Cell shape</keyword>
<keyword id="KW-0961">Cell wall biogenesis/degradation</keyword>
<keyword id="KW-0963">Cytoplasm</keyword>
<keyword id="KW-0436">Ligase</keyword>
<keyword id="KW-0547">Nucleotide-binding</keyword>
<keyword id="KW-0573">Peptidoglycan synthesis</keyword>
<keyword id="KW-1185">Reference proteome</keyword>